<feature type="chain" id="PRO_0000059421" description="Collagen-like protein 6">
    <location>
        <begin position="1"/>
        <end position="1387"/>
    </location>
</feature>
<feature type="domain" description="Collagen-like 1">
    <location>
        <begin position="95"/>
        <end position="154"/>
    </location>
</feature>
<feature type="domain" description="Collagen-like 2">
    <location>
        <begin position="161"/>
        <end position="220"/>
    </location>
</feature>
<feature type="domain" description="Collagen-like 3">
    <location>
        <begin position="266"/>
        <end position="325"/>
    </location>
</feature>
<feature type="domain" description="Collagen-like 4">
    <location>
        <begin position="344"/>
        <end position="403"/>
    </location>
</feature>
<feature type="domain" description="Collagen-like 5">
    <location>
        <begin position="450"/>
        <end position="508"/>
    </location>
</feature>
<feature type="domain" description="Collagen-like 6">
    <location>
        <begin position="512"/>
        <end position="751"/>
    </location>
</feature>
<feature type="region of interest" description="Disordered" evidence="2">
    <location>
        <begin position="98"/>
        <end position="219"/>
    </location>
</feature>
<feature type="region of interest" description="Disordered" evidence="2">
    <location>
        <begin position="268"/>
        <end position="422"/>
    </location>
</feature>
<feature type="region of interest" description="Disordered" evidence="2">
    <location>
        <begin position="454"/>
        <end position="753"/>
    </location>
</feature>
<feature type="compositionally biased region" description="Basic and acidic residues" evidence="2">
    <location>
        <begin position="114"/>
        <end position="181"/>
    </location>
</feature>
<feature type="compositionally biased region" description="Basic and acidic residues" evidence="2">
    <location>
        <begin position="189"/>
        <end position="199"/>
    </location>
</feature>
<feature type="compositionally biased region" description="Basic and acidic residues" evidence="2">
    <location>
        <begin position="207"/>
        <end position="219"/>
    </location>
</feature>
<feature type="compositionally biased region" description="Basic and acidic residues" evidence="2">
    <location>
        <begin position="268"/>
        <end position="340"/>
    </location>
</feature>
<feature type="compositionally biased region" description="Basic and acidic residues" evidence="2">
    <location>
        <begin position="364"/>
        <end position="382"/>
    </location>
</feature>
<feature type="compositionally biased region" description="Basic and acidic residues" evidence="2">
    <location>
        <begin position="390"/>
        <end position="405"/>
    </location>
</feature>
<feature type="compositionally biased region" description="Basic and acidic residues" evidence="2">
    <location>
        <begin position="454"/>
        <end position="535"/>
    </location>
</feature>
<feature type="compositionally biased region" description="Basic and acidic residues" evidence="2">
    <location>
        <begin position="544"/>
        <end position="747"/>
    </location>
</feature>
<feature type="glycosylation site" description="N-linked (GlcNAc...) asparagine; by host" evidence="1">
    <location>
        <position position="6"/>
    </location>
</feature>
<feature type="glycosylation site" description="N-linked (GlcNAc...) asparagine; by host" evidence="1">
    <location>
        <position position="794"/>
    </location>
</feature>
<feature type="glycosylation site" description="N-linked (GlcNAc...) asparagine; by host" evidence="1">
    <location>
        <position position="814"/>
    </location>
</feature>
<feature type="glycosylation site" description="N-linked (GlcNAc...) asparagine; by host" evidence="1">
    <location>
        <position position="819"/>
    </location>
</feature>
<feature type="glycosylation site" description="N-linked (GlcNAc...) asparagine; by host" evidence="1">
    <location>
        <position position="826"/>
    </location>
</feature>
<feature type="glycosylation site" description="N-linked (GlcNAc...) asparagine; by host" evidence="1">
    <location>
        <position position="846"/>
    </location>
</feature>
<feature type="glycosylation site" description="N-linked (GlcNAc...) asparagine; by host" evidence="1">
    <location>
        <position position="886"/>
    </location>
</feature>
<feature type="glycosylation site" description="N-linked (GlcNAc...) asparagine; by host" evidence="1">
    <location>
        <position position="894"/>
    </location>
</feature>
<feature type="glycosylation site" description="N-linked (GlcNAc...) asparagine; by host" evidence="1">
    <location>
        <position position="969"/>
    </location>
</feature>
<feature type="glycosylation site" description="N-linked (GlcNAc...) asparagine; by host" evidence="1">
    <location>
        <position position="1032"/>
    </location>
</feature>
<feature type="glycosylation site" description="N-linked (GlcNAc...) asparagine; by host" evidence="1">
    <location>
        <position position="1077"/>
    </location>
</feature>
<feature type="glycosylation site" description="N-linked (GlcNAc...) asparagine; by host" evidence="1">
    <location>
        <position position="1123"/>
    </location>
</feature>
<feature type="glycosylation site" description="N-linked (GlcNAc...) asparagine; by host" evidence="1">
    <location>
        <position position="1200"/>
    </location>
</feature>
<feature type="glycosylation site" description="N-linked (GlcNAc...) asparagine; by host" evidence="1">
    <location>
        <position position="1224"/>
    </location>
</feature>
<feature type="glycosylation site" description="N-linked (GlcNAc...) asparagine; by host" evidence="1">
    <location>
        <position position="1232"/>
    </location>
</feature>
<feature type="glycosylation site" description="N-linked (GlcNAc...) asparagine; by host" evidence="1">
    <location>
        <position position="1233"/>
    </location>
</feature>
<keyword id="KW-0176">Collagen</keyword>
<keyword id="KW-0325">Glycoprotein</keyword>
<keyword id="KW-0379">Hydroxylation</keyword>
<keyword id="KW-1185">Reference proteome</keyword>
<keyword id="KW-0677">Repeat</keyword>
<keyword id="KW-0946">Virion</keyword>
<gene>
    <name type="ordered locus">MIMI_L668</name>
</gene>
<organism>
    <name type="scientific">Acanthamoeba polyphaga mimivirus</name>
    <name type="common">APMV</name>
    <dbReference type="NCBI Taxonomy" id="212035"/>
    <lineage>
        <taxon>Viruses</taxon>
        <taxon>Varidnaviria</taxon>
        <taxon>Bamfordvirae</taxon>
        <taxon>Nucleocytoviricota</taxon>
        <taxon>Megaviricetes</taxon>
        <taxon>Imitervirales</taxon>
        <taxon>Mimiviridae</taxon>
        <taxon>Megamimivirinae</taxon>
        <taxon>Mimivirus</taxon>
        <taxon>Mimivirus bradfordmassiliense</taxon>
    </lineage>
</organism>
<evidence type="ECO:0000255" key="1"/>
<evidence type="ECO:0000256" key="2">
    <source>
        <dbReference type="SAM" id="MobiDB-lite"/>
    </source>
</evidence>
<evidence type="ECO:0000305" key="3"/>
<organismHost>
    <name type="scientific">Acanthamoeba polyphaga</name>
    <name type="common">Amoeba</name>
    <dbReference type="NCBI Taxonomy" id="5757"/>
</organismHost>
<protein>
    <recommendedName>
        <fullName>Collagen-like protein 6</fullName>
    </recommendedName>
</protein>
<name>COLL6_MIMIV</name>
<reference key="1">
    <citation type="journal article" date="2004" name="Science">
        <title>The 1.2-megabase genome sequence of Mimivirus.</title>
        <authorList>
            <person name="Raoult D."/>
            <person name="Audic S."/>
            <person name="Robert C."/>
            <person name="Abergel C."/>
            <person name="Renesto P."/>
            <person name="Ogata H."/>
            <person name="La Scola B."/>
            <person name="Susan M."/>
            <person name="Claverie J.-M."/>
        </authorList>
    </citation>
    <scope>NUCLEOTIDE SEQUENCE [LARGE SCALE GENOMIC DNA]</scope>
    <source>
        <strain>Rowbotham-Bradford</strain>
    </source>
</reference>
<sequence>MKNYWNCSVSDSEMNLKKKQMQKNFKNTCDSVSETFVGSGIPSSTFGKNGDIYLDRTTQYYYKKNNCIWIKYFCNGYCCFKGCKGGFFCQKGDKGNNGNNGNNGEKGQKGLKGIKGDIGDKGSKGDIGEKGDIGDKGDFGDKGIDGNKGSKGDIGDTGSKGDKGDKGDKGSKGDIGDKGSKGDIGVKGSKGDNGDKGSKGDIGVKGSKGDKGNKGDKGDNGLSILSGLDIPSPDLGMDGDLYLDTITDELYKKINGEWIEITNLKGEKGEIGSKGTKGDDGNKGNKGIKGDKGTTGDKGDKGDVGNKGDAGDKGDAGKKGEKGEMGNKGDIGDKGNDGIKGDFGSKGYKGDKGSKGTKGNNGFKGDRGDKGDKGSKGDKGDNGIKGNKGSKGDKGDNGIKGEKGESGSSILFGMGLPDQNQGEDGDIYIDTLTGELYRKVNGLWVPEIDIKGDKGEKGDRGNVGDKGEKGDIGLKGDKGEKGEKGNVGDKGDIGTKGDKGNVGDKGDIGIKGEKGDIGTKGDIGNKGDKGDKGDIGNKGNIGNKGEKGDKGVKGDIGEKGEKGDKGVKGDKGEKGEKGEKGEKGEKGDKGNKGDKGNKGDKGDKSDKGDKGNKGDKGNKGDKGNKGDKGDNGDKGDKGDNGDKGNKGDKGDNGDKGDKGDNGDKGNKGDKGDNGDKGDNGDKGNKGDNGDKGNKGDKGDNGDKGNKGDKGDNGDKGNKGDKGDKGDNGDKGDNGDKGDNGDKGDKGESGSSCQIENNDGVTIMSVCTPGIASIQAYQYEITDISGLENPYDPSNISGLNFKLFDTVKGAFRTGNFTADNMTNVGINSTAMGYHTQATGSGSFSFGNNTNGIISSNGIGSFVMGITTSSGVIISEGDGSIASGYSTNSSTIEIQNNSLSSIIHGYSISGSSMRLMEGNIGSMIIGSSETGSIVQSGSGSIASLINVRATSGTISIGSMSYGSKIFGYSNNGTITISDNVHGSQISGIVTNNGQMTIGTLSHGSYLHGYADTSSTISIGTNSFGSECIGLAQNNGTINNGDLSFGCRISGWTLSGLLSTGSGSCGTILYGVAVNSGIINTSGRNFGCFVGGYCAYYGKITIGANSFGTICHGTADASGTILVGTNSTGNLVVGSSQGTISLGSTNFGSVILGYTENSGSIISDGNNRGIFMHGYSSSASLYTASGSCGTVLMGYGTSGSAINVSGLGSFTFGYCPSSGEITQVLANGSFAFGRNNTTVSENSFSLGYGARSYMPGSMAFSSFATSGNPLRAGSAQTIKVLTRNLNTEFVLADGNFPTLPYTGYGNIKAKIIGSSGTMSVLYFQVFFDGSTHTVTIPTTPAGGQIVYSNPVAVSPAPTFTPVATVPGFSVTIANPGTQTFVASFGIVNIS</sequence>
<comment type="function">
    <text evidence="3">May participate in the formation of a layer of cross-linked glycosylated fibrils at the viral surface thus giving it a hairy-like appearance.</text>
</comment>
<comment type="subcellular location">
    <subcellularLocation>
        <location>Virion</location>
    </subcellularLocation>
</comment>
<comment type="PTM">
    <text evidence="3">May be hydroxylated on lysine by the viral-encoded procollagen-lysine,2-oxoglutarate 5-dioxygenase.</text>
</comment>
<proteinExistence type="predicted"/>
<dbReference type="EMBL" id="AY653733">
    <property type="protein sequence ID" value="AAV50929.1"/>
    <property type="molecule type" value="Genomic_DNA"/>
</dbReference>
<dbReference type="KEGG" id="vg:9925314"/>
<dbReference type="Proteomes" id="UP000001134">
    <property type="component" value="Genome"/>
</dbReference>
<dbReference type="GO" id="GO:0044423">
    <property type="term" value="C:virion component"/>
    <property type="evidence" value="ECO:0007669"/>
    <property type="project" value="UniProtKB-KW"/>
</dbReference>
<dbReference type="InterPro" id="IPR008160">
    <property type="entry name" value="Collagen"/>
</dbReference>
<dbReference type="InterPro" id="IPR050938">
    <property type="entry name" value="Collagen_Structural_Proteins"/>
</dbReference>
<dbReference type="PANTHER" id="PTHR37456:SF3">
    <property type="entry name" value="COLLAGEN ALPHA-1(XXV) CHAIN"/>
    <property type="match status" value="1"/>
</dbReference>
<dbReference type="PANTHER" id="PTHR37456">
    <property type="entry name" value="SI:CH211-266K2.1"/>
    <property type="match status" value="1"/>
</dbReference>
<dbReference type="Pfam" id="PF01391">
    <property type="entry name" value="Collagen"/>
    <property type="match status" value="9"/>
</dbReference>
<accession>Q5UQ50</accession>